<proteinExistence type="inferred from homology"/>
<gene>
    <name evidence="1" type="primary">rpiA</name>
    <name type="ordered locus">PSPPH_4880</name>
</gene>
<evidence type="ECO:0000255" key="1">
    <source>
        <dbReference type="HAMAP-Rule" id="MF_00170"/>
    </source>
</evidence>
<feature type="chain" id="PRO_1000016960" description="Ribose-5-phosphate isomerase A">
    <location>
        <begin position="1"/>
        <end position="223"/>
    </location>
</feature>
<feature type="active site" description="Proton acceptor" evidence="1">
    <location>
        <position position="107"/>
    </location>
</feature>
<feature type="binding site" evidence="1">
    <location>
        <begin position="32"/>
        <end position="35"/>
    </location>
    <ligand>
        <name>substrate</name>
    </ligand>
</feature>
<feature type="binding site" evidence="1">
    <location>
        <begin position="85"/>
        <end position="88"/>
    </location>
    <ligand>
        <name>substrate</name>
    </ligand>
</feature>
<feature type="binding site" evidence="1">
    <location>
        <begin position="98"/>
        <end position="101"/>
    </location>
    <ligand>
        <name>substrate</name>
    </ligand>
</feature>
<feature type="binding site" evidence="1">
    <location>
        <position position="125"/>
    </location>
    <ligand>
        <name>substrate</name>
    </ligand>
</feature>
<name>RPIA_PSE14</name>
<sequence length="223" mass="23352">MTQDQLKQAVAQAAVDFILPKLDDKSIVGVGTGSTANCFIDALAKHKAAFDGAVASSEATAARLKGHGIPVYELNTVSDLEFYVDGADESDEHLNLIKGGGAALTREKIVAAVAKTFICIADGSKLVPVLGAFPLPVEVIPMARSHVARQLVKLGGDPVYREGVLTDNGNIIIDVHNMSITNPVELEAQINAIVGVVTNGLFAARPADLLLLGTTEGVKTLTR</sequence>
<accession>Q48CC1</accession>
<keyword id="KW-0413">Isomerase</keyword>
<comment type="function">
    <text evidence="1">Catalyzes the reversible conversion of ribose-5-phosphate to ribulose 5-phosphate.</text>
</comment>
<comment type="catalytic activity">
    <reaction evidence="1">
        <text>aldehydo-D-ribose 5-phosphate = D-ribulose 5-phosphate</text>
        <dbReference type="Rhea" id="RHEA:14657"/>
        <dbReference type="ChEBI" id="CHEBI:58121"/>
        <dbReference type="ChEBI" id="CHEBI:58273"/>
        <dbReference type="EC" id="5.3.1.6"/>
    </reaction>
</comment>
<comment type="pathway">
    <text evidence="1">Carbohydrate degradation; pentose phosphate pathway; D-ribose 5-phosphate from D-ribulose 5-phosphate (non-oxidative stage): step 1/1.</text>
</comment>
<comment type="subunit">
    <text evidence="1">Homodimer.</text>
</comment>
<comment type="similarity">
    <text evidence="1">Belongs to the ribose 5-phosphate isomerase family.</text>
</comment>
<dbReference type="EC" id="5.3.1.6" evidence="1"/>
<dbReference type="EMBL" id="CP000058">
    <property type="protein sequence ID" value="AAZ36429.1"/>
    <property type="molecule type" value="Genomic_DNA"/>
</dbReference>
<dbReference type="RefSeq" id="WP_002555749.1">
    <property type="nucleotide sequence ID" value="NC_005773.3"/>
</dbReference>
<dbReference type="SMR" id="Q48CC1"/>
<dbReference type="KEGG" id="psp:PSPPH_4880"/>
<dbReference type="eggNOG" id="COG0120">
    <property type="taxonomic scope" value="Bacteria"/>
</dbReference>
<dbReference type="HOGENOM" id="CLU_056590_1_1_6"/>
<dbReference type="UniPathway" id="UPA00115">
    <property type="reaction ID" value="UER00412"/>
</dbReference>
<dbReference type="Proteomes" id="UP000000551">
    <property type="component" value="Chromosome"/>
</dbReference>
<dbReference type="GO" id="GO:0005829">
    <property type="term" value="C:cytosol"/>
    <property type="evidence" value="ECO:0007669"/>
    <property type="project" value="TreeGrafter"/>
</dbReference>
<dbReference type="GO" id="GO:0004751">
    <property type="term" value="F:ribose-5-phosphate isomerase activity"/>
    <property type="evidence" value="ECO:0007669"/>
    <property type="project" value="UniProtKB-UniRule"/>
</dbReference>
<dbReference type="GO" id="GO:0006014">
    <property type="term" value="P:D-ribose metabolic process"/>
    <property type="evidence" value="ECO:0007669"/>
    <property type="project" value="TreeGrafter"/>
</dbReference>
<dbReference type="GO" id="GO:0009052">
    <property type="term" value="P:pentose-phosphate shunt, non-oxidative branch"/>
    <property type="evidence" value="ECO:0007669"/>
    <property type="project" value="UniProtKB-UniRule"/>
</dbReference>
<dbReference type="CDD" id="cd01398">
    <property type="entry name" value="RPI_A"/>
    <property type="match status" value="1"/>
</dbReference>
<dbReference type="FunFam" id="3.30.70.260:FF:000004">
    <property type="entry name" value="Ribose-5-phosphate isomerase A"/>
    <property type="match status" value="1"/>
</dbReference>
<dbReference type="FunFam" id="3.40.50.1360:FF:000001">
    <property type="entry name" value="Ribose-5-phosphate isomerase A"/>
    <property type="match status" value="1"/>
</dbReference>
<dbReference type="Gene3D" id="3.30.70.260">
    <property type="match status" value="1"/>
</dbReference>
<dbReference type="Gene3D" id="3.40.50.1360">
    <property type="match status" value="1"/>
</dbReference>
<dbReference type="HAMAP" id="MF_00170">
    <property type="entry name" value="Rib_5P_isom_A"/>
    <property type="match status" value="1"/>
</dbReference>
<dbReference type="InterPro" id="IPR037171">
    <property type="entry name" value="NagB/RpiA_transferase-like"/>
</dbReference>
<dbReference type="InterPro" id="IPR020672">
    <property type="entry name" value="Ribose5P_isomerase_typA_subgr"/>
</dbReference>
<dbReference type="InterPro" id="IPR004788">
    <property type="entry name" value="Ribose5P_isomerase_type_A"/>
</dbReference>
<dbReference type="NCBIfam" id="NF001924">
    <property type="entry name" value="PRK00702.1"/>
    <property type="match status" value="1"/>
</dbReference>
<dbReference type="NCBIfam" id="TIGR00021">
    <property type="entry name" value="rpiA"/>
    <property type="match status" value="1"/>
</dbReference>
<dbReference type="PANTHER" id="PTHR11934">
    <property type="entry name" value="RIBOSE-5-PHOSPHATE ISOMERASE"/>
    <property type="match status" value="1"/>
</dbReference>
<dbReference type="PANTHER" id="PTHR11934:SF0">
    <property type="entry name" value="RIBOSE-5-PHOSPHATE ISOMERASE"/>
    <property type="match status" value="1"/>
</dbReference>
<dbReference type="Pfam" id="PF06026">
    <property type="entry name" value="Rib_5-P_isom_A"/>
    <property type="match status" value="1"/>
</dbReference>
<dbReference type="SUPFAM" id="SSF75445">
    <property type="entry name" value="D-ribose-5-phosphate isomerase (RpiA), lid domain"/>
    <property type="match status" value="1"/>
</dbReference>
<dbReference type="SUPFAM" id="SSF100950">
    <property type="entry name" value="NagB/RpiA/CoA transferase-like"/>
    <property type="match status" value="1"/>
</dbReference>
<protein>
    <recommendedName>
        <fullName evidence="1">Ribose-5-phosphate isomerase A</fullName>
        <ecNumber evidence="1">5.3.1.6</ecNumber>
    </recommendedName>
    <alternativeName>
        <fullName evidence="1">Phosphoriboisomerase A</fullName>
        <shortName evidence="1">PRI</shortName>
    </alternativeName>
</protein>
<reference key="1">
    <citation type="journal article" date="2005" name="J. Bacteriol.">
        <title>Whole-genome sequence analysis of Pseudomonas syringae pv. phaseolicola 1448A reveals divergence among pathovars in genes involved in virulence and transposition.</title>
        <authorList>
            <person name="Joardar V."/>
            <person name="Lindeberg M."/>
            <person name="Jackson R.W."/>
            <person name="Selengut J."/>
            <person name="Dodson R."/>
            <person name="Brinkac L.M."/>
            <person name="Daugherty S.C."/>
            <person name="DeBoy R.T."/>
            <person name="Durkin A.S."/>
            <person name="Gwinn Giglio M."/>
            <person name="Madupu R."/>
            <person name="Nelson W.C."/>
            <person name="Rosovitz M.J."/>
            <person name="Sullivan S.A."/>
            <person name="Crabtree J."/>
            <person name="Creasy T."/>
            <person name="Davidsen T.M."/>
            <person name="Haft D.H."/>
            <person name="Zafar N."/>
            <person name="Zhou L."/>
            <person name="Halpin R."/>
            <person name="Holley T."/>
            <person name="Khouri H.M."/>
            <person name="Feldblyum T.V."/>
            <person name="White O."/>
            <person name="Fraser C.M."/>
            <person name="Chatterjee A.K."/>
            <person name="Cartinhour S."/>
            <person name="Schneider D."/>
            <person name="Mansfield J.W."/>
            <person name="Collmer A."/>
            <person name="Buell R."/>
        </authorList>
    </citation>
    <scope>NUCLEOTIDE SEQUENCE [LARGE SCALE GENOMIC DNA]</scope>
    <source>
        <strain>1448A / Race 6</strain>
    </source>
</reference>
<organism>
    <name type="scientific">Pseudomonas savastanoi pv. phaseolicola (strain 1448A / Race 6)</name>
    <name type="common">Pseudomonas syringae pv. phaseolicola (strain 1448A / Race 6)</name>
    <dbReference type="NCBI Taxonomy" id="264730"/>
    <lineage>
        <taxon>Bacteria</taxon>
        <taxon>Pseudomonadati</taxon>
        <taxon>Pseudomonadota</taxon>
        <taxon>Gammaproteobacteria</taxon>
        <taxon>Pseudomonadales</taxon>
        <taxon>Pseudomonadaceae</taxon>
        <taxon>Pseudomonas</taxon>
    </lineage>
</organism>